<protein>
    <recommendedName>
        <fullName>Putative quercetin 2,3-dioxygenase PA2418</fullName>
        <shortName>Putative quercetinase</shortName>
        <ecNumber>1.13.11.24</ecNumber>
    </recommendedName>
    <alternativeName>
        <fullName>Pirin-like protein PA2418</fullName>
    </alternativeName>
</protein>
<accession>Q9I163</accession>
<feature type="chain" id="PRO_0000214070" description="Putative quercetin 2,3-dioxygenase PA2418">
    <location>
        <begin position="1"/>
        <end position="286"/>
    </location>
</feature>
<feature type="binding site" evidence="1">
    <location>
        <position position="61"/>
    </location>
    <ligand>
        <name>a divalent metal cation</name>
        <dbReference type="ChEBI" id="CHEBI:60240"/>
    </ligand>
</feature>
<feature type="binding site" evidence="1">
    <location>
        <position position="63"/>
    </location>
    <ligand>
        <name>a divalent metal cation</name>
        <dbReference type="ChEBI" id="CHEBI:60240"/>
    </ligand>
</feature>
<feature type="binding site" evidence="1">
    <location>
        <position position="105"/>
    </location>
    <ligand>
        <name>a divalent metal cation</name>
        <dbReference type="ChEBI" id="CHEBI:60240"/>
    </ligand>
</feature>
<feature type="binding site" evidence="1">
    <location>
        <position position="107"/>
    </location>
    <ligand>
        <name>a divalent metal cation</name>
        <dbReference type="ChEBI" id="CHEBI:60240"/>
    </ligand>
</feature>
<keyword id="KW-0223">Dioxygenase</keyword>
<keyword id="KW-0479">Metal-binding</keyword>
<keyword id="KW-0560">Oxidoreductase</keyword>
<keyword id="KW-1185">Reference proteome</keyword>
<reference key="1">
    <citation type="journal article" date="2000" name="Nature">
        <title>Complete genome sequence of Pseudomonas aeruginosa PAO1, an opportunistic pathogen.</title>
        <authorList>
            <person name="Stover C.K."/>
            <person name="Pham X.-Q.T."/>
            <person name="Erwin A.L."/>
            <person name="Mizoguchi S.D."/>
            <person name="Warrener P."/>
            <person name="Hickey M.J."/>
            <person name="Brinkman F.S.L."/>
            <person name="Hufnagle W.O."/>
            <person name="Kowalik D.J."/>
            <person name="Lagrou M."/>
            <person name="Garber R.L."/>
            <person name="Goltry L."/>
            <person name="Tolentino E."/>
            <person name="Westbrock-Wadman S."/>
            <person name="Yuan Y."/>
            <person name="Brody L.L."/>
            <person name="Coulter S.N."/>
            <person name="Folger K.R."/>
            <person name="Kas A."/>
            <person name="Larbig K."/>
            <person name="Lim R.M."/>
            <person name="Smith K.A."/>
            <person name="Spencer D.H."/>
            <person name="Wong G.K.-S."/>
            <person name="Wu Z."/>
            <person name="Paulsen I.T."/>
            <person name="Reizer J."/>
            <person name="Saier M.H. Jr."/>
            <person name="Hancock R.E.W."/>
            <person name="Lory S."/>
            <person name="Olson M.V."/>
        </authorList>
    </citation>
    <scope>NUCLEOTIDE SEQUENCE [LARGE SCALE GENOMIC DNA]</scope>
    <source>
        <strain>ATCC 15692 / DSM 22644 / CIP 104116 / JCM 14847 / LMG 12228 / 1C / PRS 101 / PAO1</strain>
    </source>
</reference>
<organism>
    <name type="scientific">Pseudomonas aeruginosa (strain ATCC 15692 / DSM 22644 / CIP 104116 / JCM 14847 / LMG 12228 / 1C / PRS 101 / PAO1)</name>
    <dbReference type="NCBI Taxonomy" id="208964"/>
    <lineage>
        <taxon>Bacteria</taxon>
        <taxon>Pseudomonadati</taxon>
        <taxon>Pseudomonadota</taxon>
        <taxon>Gammaproteobacteria</taxon>
        <taxon>Pseudomonadales</taxon>
        <taxon>Pseudomonadaceae</taxon>
        <taxon>Pseudomonas</taxon>
    </lineage>
</organism>
<gene>
    <name type="ordered locus">PA2418</name>
</gene>
<evidence type="ECO:0000250" key="1"/>
<evidence type="ECO:0000305" key="2"/>
<proteinExistence type="inferred from homology"/>
<name>Y2418_PSEAE</name>
<comment type="function">
    <text evidence="1">Putative quercetin 2,3-dioxygenase.</text>
</comment>
<comment type="catalytic activity">
    <reaction>
        <text>quercetin + O2 = 2-(3,4-dihydroxybenzoyloxy)-4,6-dihydroxybenzoate + CO</text>
        <dbReference type="Rhea" id="RHEA:15381"/>
        <dbReference type="ChEBI" id="CHEBI:15379"/>
        <dbReference type="ChEBI" id="CHEBI:17245"/>
        <dbReference type="ChEBI" id="CHEBI:57628"/>
        <dbReference type="ChEBI" id="CHEBI:57694"/>
        <dbReference type="EC" id="1.13.11.24"/>
    </reaction>
</comment>
<comment type="cofactor">
    <cofactor evidence="1">
        <name>a divalent metal cation</name>
        <dbReference type="ChEBI" id="CHEBI:60240"/>
    </cofactor>
    <text evidence="1">Binds 1 divalent metal cation.</text>
</comment>
<comment type="pathway">
    <text>Flavonoid metabolism; quercetin degradation.</text>
</comment>
<comment type="similarity">
    <text evidence="2">Belongs to the pirin family.</text>
</comment>
<sequence length="286" mass="31570">MKKVLGIYGNANRHWVGDGFPVRSLFSYNTLGQHISPFLLLDYAGPADFPPAQQRRGVGQHPHRGFETVTIVYQGEVEHHDSTGAGGRIGPGDVQWMTAASGILHEEYHSERFRSTGGTLEMVQLWVNLPSSDKMNPPRYQTLLDADIPRVGLPDRAGELRVIAGRYGRHQGPALTHSPLAVWDVQLKAGKHLALDLPKGHTCAVVVLRGTLAVGDEIVREAQVALLDRDDPRLELEANNDVQLLVLSGEPLDEPIIGYGPFVMSSREEIDQAIEDFENGRFIRAH</sequence>
<dbReference type="EC" id="1.13.11.24"/>
<dbReference type="EMBL" id="AE004091">
    <property type="protein sequence ID" value="AAG05806.1"/>
    <property type="molecule type" value="Genomic_DNA"/>
</dbReference>
<dbReference type="PIR" id="B83343">
    <property type="entry name" value="B83343"/>
</dbReference>
<dbReference type="RefSeq" id="NP_251108.1">
    <property type="nucleotide sequence ID" value="NC_002516.2"/>
</dbReference>
<dbReference type="RefSeq" id="WP_003089646.1">
    <property type="nucleotide sequence ID" value="NZ_QZGE01000027.1"/>
</dbReference>
<dbReference type="SMR" id="Q9I163"/>
<dbReference type="STRING" id="208964.PA2418"/>
<dbReference type="PaxDb" id="208964-PA2418"/>
<dbReference type="GeneID" id="880264"/>
<dbReference type="KEGG" id="pae:PA2418"/>
<dbReference type="PATRIC" id="fig|208964.12.peg.2528"/>
<dbReference type="PseudoCAP" id="PA2418"/>
<dbReference type="HOGENOM" id="CLU_045717_5_1_6"/>
<dbReference type="InParanoid" id="Q9I163"/>
<dbReference type="OrthoDB" id="9780903at2"/>
<dbReference type="PhylomeDB" id="Q9I163"/>
<dbReference type="BioCyc" id="PAER208964:G1FZ6-2455-MONOMER"/>
<dbReference type="UniPathway" id="UPA00724"/>
<dbReference type="Proteomes" id="UP000002438">
    <property type="component" value="Chromosome"/>
</dbReference>
<dbReference type="GO" id="GO:0046872">
    <property type="term" value="F:metal ion binding"/>
    <property type="evidence" value="ECO:0007669"/>
    <property type="project" value="UniProtKB-KW"/>
</dbReference>
<dbReference type="GO" id="GO:0008127">
    <property type="term" value="F:quercetin 2,3-dioxygenase activity"/>
    <property type="evidence" value="ECO:0007669"/>
    <property type="project" value="UniProtKB-EC"/>
</dbReference>
<dbReference type="CDD" id="cd02247">
    <property type="entry name" value="cupin_pirin_C"/>
    <property type="match status" value="1"/>
</dbReference>
<dbReference type="CDD" id="cd02909">
    <property type="entry name" value="cupin_pirin_N"/>
    <property type="match status" value="1"/>
</dbReference>
<dbReference type="Gene3D" id="2.60.120.10">
    <property type="entry name" value="Jelly Rolls"/>
    <property type="match status" value="2"/>
</dbReference>
<dbReference type="InterPro" id="IPR012093">
    <property type="entry name" value="Pirin"/>
</dbReference>
<dbReference type="InterPro" id="IPR008778">
    <property type="entry name" value="Pirin_C_dom"/>
</dbReference>
<dbReference type="InterPro" id="IPR003829">
    <property type="entry name" value="Pirin_N_dom"/>
</dbReference>
<dbReference type="InterPro" id="IPR053186">
    <property type="entry name" value="QDO-related"/>
</dbReference>
<dbReference type="InterPro" id="IPR014710">
    <property type="entry name" value="RmlC-like_jellyroll"/>
</dbReference>
<dbReference type="InterPro" id="IPR011051">
    <property type="entry name" value="RmlC_Cupin_sf"/>
</dbReference>
<dbReference type="PANTHER" id="PTHR43594">
    <property type="entry name" value="QUERCETIN 2,3-DIOXYGENASE"/>
    <property type="match status" value="1"/>
</dbReference>
<dbReference type="PANTHER" id="PTHR43594:SF1">
    <property type="entry name" value="QUERCETIN 2,3-DIOXYGENASE PA2418-RELATED"/>
    <property type="match status" value="1"/>
</dbReference>
<dbReference type="Pfam" id="PF02678">
    <property type="entry name" value="Pirin"/>
    <property type="match status" value="1"/>
</dbReference>
<dbReference type="Pfam" id="PF05726">
    <property type="entry name" value="Pirin_C"/>
    <property type="match status" value="1"/>
</dbReference>
<dbReference type="PIRSF" id="PIRSF006232">
    <property type="entry name" value="Pirin"/>
    <property type="match status" value="1"/>
</dbReference>
<dbReference type="SUPFAM" id="SSF51182">
    <property type="entry name" value="RmlC-like cupins"/>
    <property type="match status" value="1"/>
</dbReference>